<sequence>MDIIGGQHLRQMWDDLADVYGHKTALICESSGGVVNRYSYLELNQEINRTANLFYTLGIRKGDKVALHLDNCPEFIFCWFGLVKIGAIMVPINARLLREESAWILQNSQACLLVTSAQFYPMYQQIQQEDATQLRHICLTDVELPADDGVSSFTQLKNQQPVTLCYAPPLSTDDTAEILFTSGTTSRPKGVVITHYNLRFAGYYSAWQCALRDDDVYLTVMPAFHIDCQCTAAMAAFSAGATFVLVEKYSARAFWGQVQKYRATVTECIPMMIRTLMVQPPSVNDRQHHLREVMFYLNLSEQEKDAFCERFGVRLLTSYGMTETIVGIIGDRPGDKRRWPSIGRAGFCYEAEIRDDHNRPLPAGEIGEICIKGVPGKTIFKEYFLNPQATARVLEADGWLHTGDTGYRDEEGFFYFVDRRCNMIKRGGENVSCVELENIIAAHPKIQDIVVVGIKDSIRDEAIKAFVVLNEGEILSEEEFFNFCEQNMAKFKVPSYLEIRKDLPRNCSGKIIRKALK</sequence>
<gene>
    <name evidence="1" type="primary">caiC</name>
    <name type="ordered locus">EFER_0045</name>
</gene>
<dbReference type="EC" id="6.2.1.48" evidence="1"/>
<dbReference type="EMBL" id="CU928158">
    <property type="protein sequence ID" value="CAQ87631.1"/>
    <property type="status" value="ALT_INIT"/>
    <property type="molecule type" value="Genomic_DNA"/>
</dbReference>
<dbReference type="RefSeq" id="WP_024256367.1">
    <property type="nucleotide sequence ID" value="NC_011740.1"/>
</dbReference>
<dbReference type="SMR" id="B7LWM8"/>
<dbReference type="GeneID" id="75058867"/>
<dbReference type="KEGG" id="efe:EFER_0045"/>
<dbReference type="HOGENOM" id="CLU_000022_59_0_6"/>
<dbReference type="OrthoDB" id="9803968at2"/>
<dbReference type="UniPathway" id="UPA00117"/>
<dbReference type="Proteomes" id="UP000000745">
    <property type="component" value="Chromosome"/>
</dbReference>
<dbReference type="GO" id="GO:0051108">
    <property type="term" value="F:carnitine-CoA ligase activity"/>
    <property type="evidence" value="ECO:0007669"/>
    <property type="project" value="InterPro"/>
</dbReference>
<dbReference type="GO" id="GO:0051109">
    <property type="term" value="F:crotonobetaine-CoA ligase activity"/>
    <property type="evidence" value="ECO:0007669"/>
    <property type="project" value="InterPro"/>
</dbReference>
<dbReference type="GO" id="GO:0031956">
    <property type="term" value="F:medium-chain fatty acid-CoA ligase activity"/>
    <property type="evidence" value="ECO:0007669"/>
    <property type="project" value="TreeGrafter"/>
</dbReference>
<dbReference type="GO" id="GO:0009437">
    <property type="term" value="P:carnitine metabolic process"/>
    <property type="evidence" value="ECO:0007669"/>
    <property type="project" value="UniProtKB-UniRule"/>
</dbReference>
<dbReference type="GO" id="GO:0006631">
    <property type="term" value="P:fatty acid metabolic process"/>
    <property type="evidence" value="ECO:0007669"/>
    <property type="project" value="TreeGrafter"/>
</dbReference>
<dbReference type="CDD" id="cd05934">
    <property type="entry name" value="FACL_DitJ_like"/>
    <property type="match status" value="1"/>
</dbReference>
<dbReference type="FunFam" id="3.30.300.30:FF:000011">
    <property type="entry name" value="Crotonobetaine/carnitine--CoA ligase"/>
    <property type="match status" value="1"/>
</dbReference>
<dbReference type="Gene3D" id="3.30.300.30">
    <property type="match status" value="1"/>
</dbReference>
<dbReference type="Gene3D" id="3.40.50.12780">
    <property type="entry name" value="N-terminal domain of ligase-like"/>
    <property type="match status" value="1"/>
</dbReference>
<dbReference type="HAMAP" id="MF_01524">
    <property type="entry name" value="CaiC"/>
    <property type="match status" value="1"/>
</dbReference>
<dbReference type="InterPro" id="IPR025110">
    <property type="entry name" value="AMP-bd_C"/>
</dbReference>
<dbReference type="InterPro" id="IPR045851">
    <property type="entry name" value="AMP-bd_C_sf"/>
</dbReference>
<dbReference type="InterPro" id="IPR020845">
    <property type="entry name" value="AMP-binding_CS"/>
</dbReference>
<dbReference type="InterPro" id="IPR000873">
    <property type="entry name" value="AMP-dep_synth/lig_dom"/>
</dbReference>
<dbReference type="InterPro" id="IPR042099">
    <property type="entry name" value="ANL_N_sf"/>
</dbReference>
<dbReference type="InterPro" id="IPR023456">
    <property type="entry name" value="CaiC"/>
</dbReference>
<dbReference type="NCBIfam" id="NF005947">
    <property type="entry name" value="PRK08008.1"/>
    <property type="match status" value="1"/>
</dbReference>
<dbReference type="PANTHER" id="PTHR43201">
    <property type="entry name" value="ACYL-COA SYNTHETASE"/>
    <property type="match status" value="1"/>
</dbReference>
<dbReference type="PANTHER" id="PTHR43201:SF5">
    <property type="entry name" value="MEDIUM-CHAIN ACYL-COA LIGASE ACSF2, MITOCHONDRIAL"/>
    <property type="match status" value="1"/>
</dbReference>
<dbReference type="Pfam" id="PF00501">
    <property type="entry name" value="AMP-binding"/>
    <property type="match status" value="1"/>
</dbReference>
<dbReference type="Pfam" id="PF13193">
    <property type="entry name" value="AMP-binding_C"/>
    <property type="match status" value="1"/>
</dbReference>
<dbReference type="SUPFAM" id="SSF56801">
    <property type="entry name" value="Acetyl-CoA synthetase-like"/>
    <property type="match status" value="1"/>
</dbReference>
<dbReference type="PROSITE" id="PS00455">
    <property type="entry name" value="AMP_BINDING"/>
    <property type="match status" value="1"/>
</dbReference>
<reference key="1">
    <citation type="journal article" date="2009" name="PLoS Genet.">
        <title>Organised genome dynamics in the Escherichia coli species results in highly diverse adaptive paths.</title>
        <authorList>
            <person name="Touchon M."/>
            <person name="Hoede C."/>
            <person name="Tenaillon O."/>
            <person name="Barbe V."/>
            <person name="Baeriswyl S."/>
            <person name="Bidet P."/>
            <person name="Bingen E."/>
            <person name="Bonacorsi S."/>
            <person name="Bouchier C."/>
            <person name="Bouvet O."/>
            <person name="Calteau A."/>
            <person name="Chiapello H."/>
            <person name="Clermont O."/>
            <person name="Cruveiller S."/>
            <person name="Danchin A."/>
            <person name="Diard M."/>
            <person name="Dossat C."/>
            <person name="Karoui M.E."/>
            <person name="Frapy E."/>
            <person name="Garry L."/>
            <person name="Ghigo J.M."/>
            <person name="Gilles A.M."/>
            <person name="Johnson J."/>
            <person name="Le Bouguenec C."/>
            <person name="Lescat M."/>
            <person name="Mangenot S."/>
            <person name="Martinez-Jehanne V."/>
            <person name="Matic I."/>
            <person name="Nassif X."/>
            <person name="Oztas S."/>
            <person name="Petit M.A."/>
            <person name="Pichon C."/>
            <person name="Rouy Z."/>
            <person name="Ruf C.S."/>
            <person name="Schneider D."/>
            <person name="Tourret J."/>
            <person name="Vacherie B."/>
            <person name="Vallenet D."/>
            <person name="Medigue C."/>
            <person name="Rocha E.P.C."/>
            <person name="Denamur E."/>
        </authorList>
    </citation>
    <scope>NUCLEOTIDE SEQUENCE [LARGE SCALE GENOMIC DNA]</scope>
    <source>
        <strain>ATCC 35469 / DSM 13698 / BCRC 15582 / CCUG 18766 / IAM 14443 / JCM 21226 / LMG 7866 / NBRC 102419 / NCTC 12128 / CDC 0568-73</strain>
    </source>
</reference>
<comment type="function">
    <text evidence="1">Catalyzes the transfer of CoA to carnitine, generating the initial carnitinyl-CoA needed for the CaiB reaction cycle. Also has activity toward crotonobetaine and gamma-butyrobetaine.</text>
</comment>
<comment type="catalytic activity">
    <reaction evidence="1">
        <text>4-(trimethylamino)butanoate + ATP + CoA = 4-(trimethylamino)butanoyl-CoA + AMP + diphosphate</text>
        <dbReference type="Rhea" id="RHEA:55960"/>
        <dbReference type="ChEBI" id="CHEBI:16244"/>
        <dbReference type="ChEBI" id="CHEBI:30616"/>
        <dbReference type="ChEBI" id="CHEBI:33019"/>
        <dbReference type="ChEBI" id="CHEBI:57287"/>
        <dbReference type="ChEBI" id="CHEBI:61513"/>
        <dbReference type="ChEBI" id="CHEBI:456215"/>
        <dbReference type="EC" id="6.2.1.48"/>
    </reaction>
</comment>
<comment type="catalytic activity">
    <reaction evidence="1">
        <text>crotonobetaine + ATP + CoA = crotonobetainyl-CoA + AMP + diphosphate</text>
        <dbReference type="Rhea" id="RHEA:30079"/>
        <dbReference type="ChEBI" id="CHEBI:17237"/>
        <dbReference type="ChEBI" id="CHEBI:30616"/>
        <dbReference type="ChEBI" id="CHEBI:33019"/>
        <dbReference type="ChEBI" id="CHEBI:57287"/>
        <dbReference type="ChEBI" id="CHEBI:60933"/>
        <dbReference type="ChEBI" id="CHEBI:456215"/>
        <dbReference type="EC" id="6.2.1.48"/>
    </reaction>
</comment>
<comment type="catalytic activity">
    <reaction evidence="1">
        <text>(R)-carnitine + ATP + CoA = (R)-carnitinyl-CoA + AMP + diphosphate</text>
        <dbReference type="Rhea" id="RHEA:28514"/>
        <dbReference type="ChEBI" id="CHEBI:16347"/>
        <dbReference type="ChEBI" id="CHEBI:30616"/>
        <dbReference type="ChEBI" id="CHEBI:33019"/>
        <dbReference type="ChEBI" id="CHEBI:57287"/>
        <dbReference type="ChEBI" id="CHEBI:60932"/>
        <dbReference type="ChEBI" id="CHEBI:456215"/>
        <dbReference type="EC" id="6.2.1.48"/>
    </reaction>
</comment>
<comment type="pathway">
    <text evidence="1">Amine and polyamine metabolism; carnitine metabolism.</text>
</comment>
<comment type="similarity">
    <text evidence="1">Belongs to the ATP-dependent AMP-binding enzyme family.</text>
</comment>
<comment type="sequence caution" evidence="2">
    <conflict type="erroneous initiation">
        <sequence resource="EMBL-CDS" id="CAQ87631"/>
    </conflict>
</comment>
<proteinExistence type="inferred from homology"/>
<name>CAIC_ESCF3</name>
<protein>
    <recommendedName>
        <fullName evidence="1">Crotonobetaine/carnitine--CoA ligase</fullName>
        <ecNumber evidence="1">6.2.1.48</ecNumber>
    </recommendedName>
</protein>
<evidence type="ECO:0000255" key="1">
    <source>
        <dbReference type="HAMAP-Rule" id="MF_01524"/>
    </source>
</evidence>
<evidence type="ECO:0000305" key="2"/>
<keyword id="KW-0436">Ligase</keyword>
<feature type="chain" id="PRO_0000383403" description="Crotonobetaine/carnitine--CoA ligase">
    <location>
        <begin position="1"/>
        <end position="517"/>
    </location>
</feature>
<organism>
    <name type="scientific">Escherichia fergusonii (strain ATCC 35469 / DSM 13698 / CCUG 18766 / IAM 14443 / JCM 21226 / LMG 7866 / NBRC 102419 / NCTC 12128 / CDC 0568-73)</name>
    <dbReference type="NCBI Taxonomy" id="585054"/>
    <lineage>
        <taxon>Bacteria</taxon>
        <taxon>Pseudomonadati</taxon>
        <taxon>Pseudomonadota</taxon>
        <taxon>Gammaproteobacteria</taxon>
        <taxon>Enterobacterales</taxon>
        <taxon>Enterobacteriaceae</taxon>
        <taxon>Escherichia</taxon>
    </lineage>
</organism>
<accession>B7LWM8</accession>